<feature type="chain" id="PRO_0000274724" description="Phosphonates import ATP-binding protein PhnC 1">
    <location>
        <begin position="1"/>
        <end position="278"/>
    </location>
</feature>
<feature type="domain" description="ABC transporter" evidence="1">
    <location>
        <begin position="5"/>
        <end position="253"/>
    </location>
</feature>
<feature type="binding site" evidence="1">
    <location>
        <begin position="37"/>
        <end position="44"/>
    </location>
    <ligand>
        <name>ATP</name>
        <dbReference type="ChEBI" id="CHEBI:30616"/>
    </ligand>
</feature>
<accession>Q02QM1</accession>
<evidence type="ECO:0000255" key="1">
    <source>
        <dbReference type="HAMAP-Rule" id="MF_01713"/>
    </source>
</evidence>
<gene>
    <name evidence="1" type="primary">phnC1</name>
    <name type="ordered locus">PA14_20300</name>
</gene>
<reference key="1">
    <citation type="journal article" date="2006" name="Genome Biol.">
        <title>Genomic analysis reveals that Pseudomonas aeruginosa virulence is combinatorial.</title>
        <authorList>
            <person name="Lee D.G."/>
            <person name="Urbach J.M."/>
            <person name="Wu G."/>
            <person name="Liberati N.T."/>
            <person name="Feinbaum R.L."/>
            <person name="Miyata S."/>
            <person name="Diggins L.T."/>
            <person name="He J."/>
            <person name="Saucier M."/>
            <person name="Deziel E."/>
            <person name="Friedman L."/>
            <person name="Li L."/>
            <person name="Grills G."/>
            <person name="Montgomery K."/>
            <person name="Kucherlapati R."/>
            <person name="Rahme L.G."/>
            <person name="Ausubel F.M."/>
        </authorList>
    </citation>
    <scope>NUCLEOTIDE SEQUENCE [LARGE SCALE GENOMIC DNA]</scope>
    <source>
        <strain>UCBPP-PA14</strain>
    </source>
</reference>
<protein>
    <recommendedName>
        <fullName evidence="1">Phosphonates import ATP-binding protein PhnC 1</fullName>
        <ecNumber evidence="1">7.3.2.2</ecNumber>
    </recommendedName>
</protein>
<organism>
    <name type="scientific">Pseudomonas aeruginosa (strain UCBPP-PA14)</name>
    <dbReference type="NCBI Taxonomy" id="208963"/>
    <lineage>
        <taxon>Bacteria</taxon>
        <taxon>Pseudomonadati</taxon>
        <taxon>Pseudomonadota</taxon>
        <taxon>Gammaproteobacteria</taxon>
        <taxon>Pseudomonadales</taxon>
        <taxon>Pseudomonadaceae</taxon>
        <taxon>Pseudomonas</taxon>
    </lineage>
</organism>
<name>PHNC1_PSEAB</name>
<comment type="function">
    <text evidence="1">Part of the ABC transporter complex PhnCDE involved in phosphonates import. Responsible for energy coupling to the transport system.</text>
</comment>
<comment type="catalytic activity">
    <reaction evidence="1">
        <text>phosphonate(out) + ATP + H2O = phosphonate(in) + ADP + phosphate + H(+)</text>
        <dbReference type="Rhea" id="RHEA:18065"/>
        <dbReference type="ChEBI" id="CHEBI:15377"/>
        <dbReference type="ChEBI" id="CHEBI:15378"/>
        <dbReference type="ChEBI" id="CHEBI:16215"/>
        <dbReference type="ChEBI" id="CHEBI:30616"/>
        <dbReference type="ChEBI" id="CHEBI:43474"/>
        <dbReference type="ChEBI" id="CHEBI:456216"/>
        <dbReference type="EC" id="7.3.2.2"/>
    </reaction>
</comment>
<comment type="subunit">
    <text evidence="1">The complex is composed of two ATP-binding proteins (PhnC), two transmembrane proteins (PhnE) and a solute-binding protein (PhnD).</text>
</comment>
<comment type="subcellular location">
    <subcellularLocation>
        <location evidence="1">Cell inner membrane</location>
        <topology evidence="1">Peripheral membrane protein</topology>
    </subcellularLocation>
</comment>
<comment type="similarity">
    <text evidence="1">Belongs to the ABC transporter superfamily. Phosphonates importer (TC 3.A.1.9.1) family.</text>
</comment>
<keyword id="KW-0067">ATP-binding</keyword>
<keyword id="KW-0997">Cell inner membrane</keyword>
<keyword id="KW-1003">Cell membrane</keyword>
<keyword id="KW-0472">Membrane</keyword>
<keyword id="KW-0547">Nucleotide-binding</keyword>
<keyword id="KW-0918">Phosphonate transport</keyword>
<keyword id="KW-1278">Translocase</keyword>
<keyword id="KW-0813">Transport</keyword>
<sequence>MSAVIRVDSLNKTFARKQALFNLKLEIQAGEMVALIGASGSGKSTLLRHVAGLARCDRDNGGSIDVLGRRLQASGRLSGEVRRLRADIGYIFQQFNLVNRLSVLDNVLLGFLGRMPRWRGSLGLFSAEQKRQALEALARVGLADFAGQRASTLSGGQQQRVAIARALTQKAEVILADEPIASLDPESARKVMDILADINRHDGKTVVVTLHQVDYALRYCPRAVALKGGRILFDGSSEHLSEGFLNELYGAEGDTPLLFSDRARRGAESQPELTLARA</sequence>
<proteinExistence type="inferred from homology"/>
<dbReference type="EC" id="7.3.2.2" evidence="1"/>
<dbReference type="EMBL" id="CP000438">
    <property type="protein sequence ID" value="ABJ12638.1"/>
    <property type="molecule type" value="Genomic_DNA"/>
</dbReference>
<dbReference type="SMR" id="Q02QM1"/>
<dbReference type="KEGG" id="pau:PA14_20300"/>
<dbReference type="PseudoCAP" id="PA14_20300"/>
<dbReference type="HOGENOM" id="CLU_000604_1_22_6"/>
<dbReference type="BioCyc" id="PAER208963:G1G74-1672-MONOMER"/>
<dbReference type="Proteomes" id="UP000000653">
    <property type="component" value="Chromosome"/>
</dbReference>
<dbReference type="GO" id="GO:0005886">
    <property type="term" value="C:plasma membrane"/>
    <property type="evidence" value="ECO:0007669"/>
    <property type="project" value="UniProtKB-SubCell"/>
</dbReference>
<dbReference type="GO" id="GO:0015416">
    <property type="term" value="F:ABC-type phosphonate transporter activity"/>
    <property type="evidence" value="ECO:0007669"/>
    <property type="project" value="UniProtKB-EC"/>
</dbReference>
<dbReference type="GO" id="GO:0005524">
    <property type="term" value="F:ATP binding"/>
    <property type="evidence" value="ECO:0007669"/>
    <property type="project" value="UniProtKB-KW"/>
</dbReference>
<dbReference type="GO" id="GO:0016887">
    <property type="term" value="F:ATP hydrolysis activity"/>
    <property type="evidence" value="ECO:0007669"/>
    <property type="project" value="InterPro"/>
</dbReference>
<dbReference type="CDD" id="cd03256">
    <property type="entry name" value="ABC_PhnC_transporter"/>
    <property type="match status" value="1"/>
</dbReference>
<dbReference type="Gene3D" id="3.40.50.300">
    <property type="entry name" value="P-loop containing nucleotide triphosphate hydrolases"/>
    <property type="match status" value="1"/>
</dbReference>
<dbReference type="InterPro" id="IPR003593">
    <property type="entry name" value="AAA+_ATPase"/>
</dbReference>
<dbReference type="InterPro" id="IPR003439">
    <property type="entry name" value="ABC_transporter-like_ATP-bd"/>
</dbReference>
<dbReference type="InterPro" id="IPR017871">
    <property type="entry name" value="ABC_transporter-like_CS"/>
</dbReference>
<dbReference type="InterPro" id="IPR012693">
    <property type="entry name" value="ABC_transpr_PhnC"/>
</dbReference>
<dbReference type="InterPro" id="IPR050086">
    <property type="entry name" value="MetN_ABC_transporter-like"/>
</dbReference>
<dbReference type="InterPro" id="IPR027417">
    <property type="entry name" value="P-loop_NTPase"/>
</dbReference>
<dbReference type="NCBIfam" id="TIGR02315">
    <property type="entry name" value="ABC_phnC"/>
    <property type="match status" value="1"/>
</dbReference>
<dbReference type="PANTHER" id="PTHR43166">
    <property type="entry name" value="AMINO ACID IMPORT ATP-BINDING PROTEIN"/>
    <property type="match status" value="1"/>
</dbReference>
<dbReference type="PANTHER" id="PTHR43166:SF6">
    <property type="entry name" value="PHOSPHONATES IMPORT ATP-BINDING PROTEIN PHNC"/>
    <property type="match status" value="1"/>
</dbReference>
<dbReference type="Pfam" id="PF00005">
    <property type="entry name" value="ABC_tran"/>
    <property type="match status" value="1"/>
</dbReference>
<dbReference type="SMART" id="SM00382">
    <property type="entry name" value="AAA"/>
    <property type="match status" value="1"/>
</dbReference>
<dbReference type="SUPFAM" id="SSF52540">
    <property type="entry name" value="P-loop containing nucleoside triphosphate hydrolases"/>
    <property type="match status" value="1"/>
</dbReference>
<dbReference type="PROSITE" id="PS00211">
    <property type="entry name" value="ABC_TRANSPORTER_1"/>
    <property type="match status" value="1"/>
</dbReference>
<dbReference type="PROSITE" id="PS50893">
    <property type="entry name" value="ABC_TRANSPORTER_2"/>
    <property type="match status" value="1"/>
</dbReference>
<dbReference type="PROSITE" id="PS51249">
    <property type="entry name" value="PHNC"/>
    <property type="match status" value="1"/>
</dbReference>